<sequence>MASGGLRGLAVAGGGESSDSEDDGWEIGYLDRVSQKLKVPLPVEEKNETFKKALTTGDISLVQELLDSGISVDSSFRYGWTPLMYAASIANVELVRVLLDRGANASFDKDKQTILITACSARGSEEQILKCVELLLSRNADPNVACRRLMTPIMYAARDGHPQVVAVLVAHGAEVNTQDENGYTALTWAARQGHKNVVLKLLELGANKMLQTKDGKIPSEIAKRNKHLEIFNFLSLTLNPLEGNLKQLTKEETICKLLTTDSDKEKDHIFSSYTAFGDLEIFLHGLGLEHMTDLLKEKDITLRHLLTMRKDEFTKNGITNKDQQKILSALKELEVEEIKFGELPEVAKLEISGDEFLNFLLKLNKQCGHLITAVQNIITELPVNSHKIVLEWASPRNFTSVCEELVSNVEDLSEEVHKLKDLIQKLQNERENDPTHIPLMEEVSTWNSRILKRTAIAVCGFGFLLFICKLTVQRKYPNICF</sequence>
<dbReference type="EMBL" id="DP000022">
    <property type="protein sequence ID" value="ABB89825.1"/>
    <property type="molecule type" value="Genomic_DNA"/>
</dbReference>
<dbReference type="RefSeq" id="XP_012616564.1">
    <property type="nucleotide sequence ID" value="XM_012761110.1"/>
</dbReference>
<dbReference type="SMR" id="Q2QL84"/>
<dbReference type="Ensembl" id="ENSMICT00000005750.3">
    <property type="protein sequence ID" value="ENSMICP00000005247.2"/>
    <property type="gene ID" value="ENSMICG00000005752.3"/>
</dbReference>
<dbReference type="GeneID" id="105869374"/>
<dbReference type="KEGG" id="mmur:105869374"/>
<dbReference type="CTD" id="136991"/>
<dbReference type="GeneTree" id="ENSGT00880000138051"/>
<dbReference type="OrthoDB" id="439236at2759"/>
<dbReference type="Proteomes" id="UP000694394">
    <property type="component" value="Chromosome 11"/>
</dbReference>
<dbReference type="Bgee" id="ENSMICG00000005752">
    <property type="expression patterns" value="Expressed in lung"/>
</dbReference>
<dbReference type="GO" id="GO:0071546">
    <property type="term" value="C:pi-body"/>
    <property type="evidence" value="ECO:0000250"/>
    <property type="project" value="UniProtKB"/>
</dbReference>
<dbReference type="GO" id="GO:0030154">
    <property type="term" value="P:cell differentiation"/>
    <property type="evidence" value="ECO:0007669"/>
    <property type="project" value="UniProtKB-KW"/>
</dbReference>
<dbReference type="GO" id="GO:0007140">
    <property type="term" value="P:male meiotic nuclear division"/>
    <property type="evidence" value="ECO:0000250"/>
    <property type="project" value="UniProtKB"/>
</dbReference>
<dbReference type="GO" id="GO:0031047">
    <property type="term" value="P:regulatory ncRNA-mediated gene silencing"/>
    <property type="evidence" value="ECO:0007669"/>
    <property type="project" value="UniProtKB-KW"/>
</dbReference>
<dbReference type="GO" id="GO:0007283">
    <property type="term" value="P:spermatogenesis"/>
    <property type="evidence" value="ECO:0000250"/>
    <property type="project" value="UniProtKB"/>
</dbReference>
<dbReference type="GO" id="GO:0010526">
    <property type="term" value="P:transposable element silencing"/>
    <property type="evidence" value="ECO:0000250"/>
    <property type="project" value="UniProtKB"/>
</dbReference>
<dbReference type="CDD" id="cd09521">
    <property type="entry name" value="SAM_ASZ1"/>
    <property type="match status" value="1"/>
</dbReference>
<dbReference type="FunFam" id="1.25.40.20:FF:000192">
    <property type="entry name" value="Ankyrin repeat, SAM and basic leucine zipper domain-containing 1"/>
    <property type="match status" value="1"/>
</dbReference>
<dbReference type="FunFam" id="1.10.150.50:FF:000060">
    <property type="entry name" value="Ankyrin repeat, SAM and basic leucine zipper domain-containing protein 1"/>
    <property type="match status" value="1"/>
</dbReference>
<dbReference type="Gene3D" id="1.25.40.20">
    <property type="entry name" value="Ankyrin repeat-containing domain"/>
    <property type="match status" value="1"/>
</dbReference>
<dbReference type="Gene3D" id="1.10.150.50">
    <property type="entry name" value="Transcription Factor, Ets-1"/>
    <property type="match status" value="1"/>
</dbReference>
<dbReference type="InterPro" id="IPR002110">
    <property type="entry name" value="Ankyrin_rpt"/>
</dbReference>
<dbReference type="InterPro" id="IPR036770">
    <property type="entry name" value="Ankyrin_rpt-contain_sf"/>
</dbReference>
<dbReference type="InterPro" id="IPR042650">
    <property type="entry name" value="Asz1_SAM"/>
</dbReference>
<dbReference type="InterPro" id="IPR001660">
    <property type="entry name" value="SAM"/>
</dbReference>
<dbReference type="InterPro" id="IPR013761">
    <property type="entry name" value="SAM/pointed_sf"/>
</dbReference>
<dbReference type="PANTHER" id="PTHR24157">
    <property type="entry name" value="ANKYRIN REPEAT, SAM AND BASIC LEUCINE ZIPPER DOMAIN-CONTAINING PROTEIN 1"/>
    <property type="match status" value="1"/>
</dbReference>
<dbReference type="PANTHER" id="PTHR24157:SF3">
    <property type="entry name" value="ANKYRIN REPEAT, SAM AND BASIC LEUCINE ZIPPER DOMAIN-CONTAINING PROTEIN 1"/>
    <property type="match status" value="1"/>
</dbReference>
<dbReference type="Pfam" id="PF12796">
    <property type="entry name" value="Ank_2"/>
    <property type="match status" value="1"/>
</dbReference>
<dbReference type="Pfam" id="PF13637">
    <property type="entry name" value="Ank_4"/>
    <property type="match status" value="1"/>
</dbReference>
<dbReference type="Pfam" id="PF07647">
    <property type="entry name" value="SAM_2"/>
    <property type="match status" value="1"/>
</dbReference>
<dbReference type="PRINTS" id="PR01415">
    <property type="entry name" value="ANKYRIN"/>
</dbReference>
<dbReference type="SMART" id="SM00248">
    <property type="entry name" value="ANK"/>
    <property type="match status" value="5"/>
</dbReference>
<dbReference type="SUPFAM" id="SSF48403">
    <property type="entry name" value="Ankyrin repeat"/>
    <property type="match status" value="1"/>
</dbReference>
<dbReference type="SUPFAM" id="SSF140860">
    <property type="entry name" value="Pseudo ankyrin repeat-like"/>
    <property type="match status" value="1"/>
</dbReference>
<dbReference type="SUPFAM" id="SSF47769">
    <property type="entry name" value="SAM/Pointed domain"/>
    <property type="match status" value="1"/>
</dbReference>
<dbReference type="PROSITE" id="PS50297">
    <property type="entry name" value="ANK_REP_REGION"/>
    <property type="match status" value="1"/>
</dbReference>
<dbReference type="PROSITE" id="PS50088">
    <property type="entry name" value="ANK_REPEAT"/>
    <property type="match status" value="3"/>
</dbReference>
<feature type="chain" id="PRO_0000226352" description="Ankyrin repeat, SAM and basic leucine zipper domain-containing protein 1">
    <location>
        <begin position="1"/>
        <end position="481"/>
    </location>
</feature>
<feature type="repeat" description="ANK 1">
    <location>
        <begin position="45"/>
        <end position="74"/>
    </location>
</feature>
<feature type="repeat" description="ANK 2">
    <location>
        <begin position="78"/>
        <end position="107"/>
    </location>
</feature>
<feature type="repeat" description="ANK 3">
    <location>
        <begin position="110"/>
        <end position="144"/>
    </location>
</feature>
<feature type="repeat" description="ANK 4">
    <location>
        <begin position="148"/>
        <end position="177"/>
    </location>
</feature>
<feature type="repeat" description="ANK 5">
    <location>
        <begin position="181"/>
        <end position="210"/>
    </location>
</feature>
<feature type="repeat" description="ANK 6">
    <location>
        <begin position="214"/>
        <end position="243"/>
    </location>
</feature>
<feature type="domain" description="SAM">
    <location>
        <begin position="272"/>
        <end position="334"/>
    </location>
</feature>
<feature type="region of interest" description="Disordered" evidence="3">
    <location>
        <begin position="1"/>
        <end position="23"/>
    </location>
</feature>
<feature type="compositionally biased region" description="Gly residues" evidence="3">
    <location>
        <begin position="1"/>
        <end position="16"/>
    </location>
</feature>
<feature type="modified residue" description="Phosphoserine" evidence="2">
    <location>
        <position position="17"/>
    </location>
</feature>
<feature type="modified residue" description="Phosphoserine" evidence="2">
    <location>
        <position position="18"/>
    </location>
</feature>
<feature type="modified residue" description="Phosphoserine" evidence="2">
    <location>
        <position position="20"/>
    </location>
</feature>
<keyword id="KW-0040">ANK repeat</keyword>
<keyword id="KW-0963">Cytoplasm</keyword>
<keyword id="KW-0217">Developmental protein</keyword>
<keyword id="KW-0221">Differentiation</keyword>
<keyword id="KW-0469">Meiosis</keyword>
<keyword id="KW-0597">Phosphoprotein</keyword>
<keyword id="KW-1185">Reference proteome</keyword>
<keyword id="KW-0677">Repeat</keyword>
<keyword id="KW-0943">RNA-mediated gene silencing</keyword>
<keyword id="KW-0744">Spermatogenesis</keyword>
<evidence type="ECO:0000250" key="1"/>
<evidence type="ECO:0000250" key="2">
    <source>
        <dbReference type="UniProtKB" id="Q8VD46"/>
    </source>
</evidence>
<evidence type="ECO:0000256" key="3">
    <source>
        <dbReference type="SAM" id="MobiDB-lite"/>
    </source>
</evidence>
<organism>
    <name type="scientific">Microcebus murinus</name>
    <name type="common">Gray mouse lemur</name>
    <name type="synonym">Lemur murinus</name>
    <dbReference type="NCBI Taxonomy" id="30608"/>
    <lineage>
        <taxon>Eukaryota</taxon>
        <taxon>Metazoa</taxon>
        <taxon>Chordata</taxon>
        <taxon>Craniata</taxon>
        <taxon>Vertebrata</taxon>
        <taxon>Euteleostomi</taxon>
        <taxon>Mammalia</taxon>
        <taxon>Eutheria</taxon>
        <taxon>Euarchontoglires</taxon>
        <taxon>Primates</taxon>
        <taxon>Strepsirrhini</taxon>
        <taxon>Lemuriformes</taxon>
        <taxon>Cheirogaleidae</taxon>
        <taxon>Microcebus</taxon>
    </lineage>
</organism>
<reference key="1">
    <citation type="submission" date="2005-11" db="EMBL/GenBank/DDBJ databases">
        <title>NISC comparative sequencing initiative.</title>
        <authorList>
            <person name="Antonellis A."/>
            <person name="Ayele K."/>
            <person name="Benjamin B."/>
            <person name="Blakesley R.W."/>
            <person name="Boakye A."/>
            <person name="Bouffard G.G."/>
            <person name="Brinkley C."/>
            <person name="Brooks S."/>
            <person name="Chu G."/>
            <person name="Coleman H."/>
            <person name="Engle J."/>
            <person name="Gestole M."/>
            <person name="Greene A."/>
            <person name="Guan X."/>
            <person name="Gupta J."/>
            <person name="Haghighi P."/>
            <person name="Han J."/>
            <person name="Hansen N."/>
            <person name="Ho S.-L."/>
            <person name="Hu P."/>
            <person name="Hunter G."/>
            <person name="Hurle B."/>
            <person name="Idol J.R."/>
            <person name="Kwong P."/>
            <person name="Laric P."/>
            <person name="Larson S."/>
            <person name="Lee-Lin S.-Q."/>
            <person name="Legaspi R."/>
            <person name="Madden M."/>
            <person name="Maduro Q.L."/>
            <person name="Maduro V.B."/>
            <person name="Margulies E.H."/>
            <person name="Masiello C."/>
            <person name="Maskeri B."/>
            <person name="McDowell J."/>
            <person name="Mojidi H.A."/>
            <person name="Mullikin J.C."/>
            <person name="Oestreicher J.S."/>
            <person name="Park M."/>
            <person name="Portnoy M.E."/>
            <person name="Prasad A."/>
            <person name="Puri O."/>
            <person name="Reddix-Dugue N."/>
            <person name="Schandler K."/>
            <person name="Schueler M.G."/>
            <person name="Sison C."/>
            <person name="Stantripop S."/>
            <person name="Stephen E."/>
            <person name="Taye A."/>
            <person name="Thomas J.W."/>
            <person name="Thomas P.J."/>
            <person name="Tsipouri V."/>
            <person name="Ung L."/>
            <person name="Vogt J.L."/>
            <person name="Wetherby K.D."/>
            <person name="Young A."/>
            <person name="Green E.D."/>
        </authorList>
    </citation>
    <scope>NUCLEOTIDE SEQUENCE [LARGE SCALE GENOMIC DNA]</scope>
</reference>
<name>ASZ1_MICMU</name>
<accession>Q2QL84</accession>
<proteinExistence type="inferred from homology"/>
<comment type="function">
    <text evidence="1">Plays a central role during spermatogenesis by repressing transposable elements and preventing their mobilization, which is essential for the germline integrity. Acts via the piRNA metabolic process, which mediates the repression of transposable elements during meiosis by forming complexes composed of piRNAs and Piwi proteins and governs the methylation and subsequent repression of transposons. Its association with pi-bodies suggests a participation in the primary piRNAs metabolic process. Required prior to the pachytene stage to facilitate the production of multiple types of piRNAs, including those associated with repeats involved in the regulation of retrotransposons. May act by mediating protein-protein interactions during germ cell maturation (By similarity).</text>
</comment>
<comment type="subunit">
    <text evidence="1">Interacts with DDX4, PIWIL1, RANBP9 and TDRD1.</text>
</comment>
<comment type="subcellular location">
    <subcellularLocation>
        <location evidence="1">Cytoplasm</location>
    </subcellularLocation>
    <text evidence="1">Component of the meiotic nuage, also named P granule, a germ-cell-specific organelle required to repress transposon activity during meiosis. Specifically localizes to pi-bodies, a subset of the nuage which contains primary piRNAs (By similarity).</text>
</comment>
<gene>
    <name type="primary">ASZ1</name>
    <name type="synonym">GASZ</name>
</gene>
<protein>
    <recommendedName>
        <fullName>Ankyrin repeat, SAM and basic leucine zipper domain-containing protein 1</fullName>
    </recommendedName>
    <alternativeName>
        <fullName>Germ cell-specific ankyrin, SAM and basic leucine zipper domain-containing protein</fullName>
    </alternativeName>
</protein>